<evidence type="ECO:0000255" key="1">
    <source>
        <dbReference type="HAMAP-Rule" id="MF_01361"/>
    </source>
</evidence>
<evidence type="ECO:0000305" key="2"/>
<keyword id="KW-1003">Cell membrane</keyword>
<keyword id="KW-0472">Membrane</keyword>
<keyword id="KW-1185">Reference proteome</keyword>
<keyword id="KW-0812">Transmembrane</keyword>
<keyword id="KW-1133">Transmembrane helix</keyword>
<organism>
    <name type="scientific">Brucella abortus (strain 2308)</name>
    <dbReference type="NCBI Taxonomy" id="359391"/>
    <lineage>
        <taxon>Bacteria</taxon>
        <taxon>Pseudomonadati</taxon>
        <taxon>Pseudomonadota</taxon>
        <taxon>Alphaproteobacteria</taxon>
        <taxon>Hyphomicrobiales</taxon>
        <taxon>Brucellaceae</taxon>
        <taxon>Brucella/Ochrobactrum group</taxon>
        <taxon>Brucella</taxon>
    </lineage>
</organism>
<protein>
    <recommendedName>
        <fullName evidence="1">UPF0391 membrane protein BAB1_1670</fullName>
    </recommendedName>
</protein>
<proteinExistence type="inferred from homology"/>
<feature type="chain" id="PRO_0000256719" description="UPF0391 membrane protein BAB1_1670">
    <location>
        <begin position="1"/>
        <end position="54"/>
    </location>
</feature>
<feature type="transmembrane region" description="Helical" evidence="1">
    <location>
        <begin position="5"/>
        <end position="25"/>
    </location>
</feature>
<feature type="transmembrane region" description="Helical" evidence="1">
    <location>
        <begin position="29"/>
        <end position="48"/>
    </location>
</feature>
<accession>Q2YRJ8</accession>
<dbReference type="EMBL" id="AM040264">
    <property type="protein sequence ID" value="CAJ11626.1"/>
    <property type="status" value="ALT_INIT"/>
    <property type="molecule type" value="Genomic_DNA"/>
</dbReference>
<dbReference type="RefSeq" id="WP_002964748.1">
    <property type="nucleotide sequence ID" value="NZ_KN046823.1"/>
</dbReference>
<dbReference type="STRING" id="359391.BAB1_1670"/>
<dbReference type="KEGG" id="bmf:BAB1_1670"/>
<dbReference type="PATRIC" id="fig|359391.11.peg.187"/>
<dbReference type="HOGENOM" id="CLU_187346_0_0_5"/>
<dbReference type="Proteomes" id="UP000002719">
    <property type="component" value="Chromosome I"/>
</dbReference>
<dbReference type="GO" id="GO:0005886">
    <property type="term" value="C:plasma membrane"/>
    <property type="evidence" value="ECO:0007669"/>
    <property type="project" value="UniProtKB-SubCell"/>
</dbReference>
<dbReference type="HAMAP" id="MF_01361">
    <property type="entry name" value="UPF0391"/>
    <property type="match status" value="1"/>
</dbReference>
<dbReference type="InterPro" id="IPR009760">
    <property type="entry name" value="DUF1328"/>
</dbReference>
<dbReference type="NCBIfam" id="NF010228">
    <property type="entry name" value="PRK13682.1-3"/>
    <property type="match status" value="1"/>
</dbReference>
<dbReference type="Pfam" id="PF07043">
    <property type="entry name" value="DUF1328"/>
    <property type="match status" value="1"/>
</dbReference>
<dbReference type="PIRSF" id="PIRSF036466">
    <property type="entry name" value="UCP036466"/>
    <property type="match status" value="1"/>
</dbReference>
<sequence>MLYYVLVFLVVALVAGALGFGGIAGASAGIAQILFFVFLALLVISLIASAIRKA</sequence>
<comment type="subcellular location">
    <subcellularLocation>
        <location evidence="1">Cell membrane</location>
        <topology evidence="1">Multi-pass membrane protein</topology>
    </subcellularLocation>
</comment>
<comment type="similarity">
    <text evidence="1">Belongs to the UPF0391 family.</text>
</comment>
<comment type="sequence caution" evidence="2">
    <conflict type="erroneous initiation">
        <sequence resource="EMBL-CDS" id="CAJ11626"/>
    </conflict>
</comment>
<reference key="1">
    <citation type="journal article" date="2005" name="Infect. Immun.">
        <title>Whole-genome analyses of speciation events in pathogenic Brucellae.</title>
        <authorList>
            <person name="Chain P.S."/>
            <person name="Comerci D.J."/>
            <person name="Tolmasky M.E."/>
            <person name="Larimer F.W."/>
            <person name="Malfatti S.A."/>
            <person name="Vergez L.M."/>
            <person name="Aguero F."/>
            <person name="Land M.L."/>
            <person name="Ugalde R.A."/>
            <person name="Garcia E."/>
        </authorList>
    </citation>
    <scope>NUCLEOTIDE SEQUENCE [LARGE SCALE GENOMIC DNA]</scope>
    <source>
        <strain>2308</strain>
    </source>
</reference>
<gene>
    <name type="ordered locus">BAB1_1670</name>
</gene>
<name>Y1670_BRUA2</name>